<keyword id="KW-0025">Alternative splicing</keyword>
<keyword id="KW-0158">Chromosome</keyword>
<keyword id="KW-0175">Coiled coil</keyword>
<keyword id="KW-0963">Cytoplasm</keyword>
<keyword id="KW-0221">Differentiation</keyword>
<keyword id="KW-0539">Nucleus</keyword>
<keyword id="KW-1185">Reference proteome</keyword>
<keyword id="KW-0744">Spermatogenesis</keyword>
<sequence>MDLTASLEDDQREKLRQYTEFTHQQDYEVAIGTLASLNWNLEQAIEAHLMQEDKNDDEDPEILETIPAAASGRNAGASSSSRFEPEVINIEDDEMPATRGRRRGRAVTPDETTTVDNQVKRLRIDDGSSSSSNGAATHHRGAAIPRQKRGQATEPTPSSSGSSSASFSSRRGTRANPVPPPNQEPAHPESARQNGGILASRHNNHNNQQNNHHHHHQRIPINPRRVDVFNVDSDEDDDSMAIAYEDDDDGVHEVHHSEVVARGSGPPNGRIPMIPDGFSSVSDALRNFVAIFSDRFCSTPQTQAFMPPFYTEPLPAAVKEAFDHPNSEHRRPLLFYINHDRSIAANIFASQVLCSETVSTLIRHQYVLFPWDITSDSNLMLFLEYLQAANMGDVRTIIQRLAMSKIESFPLMAIVVKERNSYRLVDYCRGTDTSDQVMEKLLSGVSEYSDIRMNEQSERREREEREAIRNQQEAEYKASLAADKARMEAKQQEIEEQRLEEERKLREEEEECVRRQTVASTVPEEPPASAPLAEIINVKFRLPEGGQDMRRFRRLESIQTLINYLSSKGYSPDKFKYFNSDFPKKEITRHFDLSHNFADTKWPAREQIFVEEI</sequence>
<organism evidence="9">
    <name type="scientific">Caenorhabditis elegans</name>
    <dbReference type="NCBI Taxonomy" id="6239"/>
    <lineage>
        <taxon>Eukaryota</taxon>
        <taxon>Metazoa</taxon>
        <taxon>Ecdysozoa</taxon>
        <taxon>Nematoda</taxon>
        <taxon>Chromadorea</taxon>
        <taxon>Rhabditida</taxon>
        <taxon>Rhabditina</taxon>
        <taxon>Rhabditomorpha</taxon>
        <taxon>Rhabditoidea</taxon>
        <taxon>Rhabditidae</taxon>
        <taxon>Peloderinae</taxon>
        <taxon>Caenorhabditis</taxon>
    </lineage>
</organism>
<accession>H2L056</accession>
<accession>A0A0K3ARL0</accession>
<accession>A0A0K3ATZ0</accession>
<accession>A0A0K3AWX1</accession>
<accession>Q6A589</accession>
<dbReference type="EMBL" id="BX284602">
    <property type="protein sequence ID" value="CCD71486.1"/>
    <property type="molecule type" value="Genomic_DNA"/>
</dbReference>
<dbReference type="EMBL" id="BX284602">
    <property type="protein sequence ID" value="CCD71487.1"/>
    <property type="molecule type" value="Genomic_DNA"/>
</dbReference>
<dbReference type="EMBL" id="BX284602">
    <property type="protein sequence ID" value="CTQ86486.1"/>
    <property type="molecule type" value="Genomic_DNA"/>
</dbReference>
<dbReference type="EMBL" id="BX284602">
    <property type="protein sequence ID" value="CTQ86487.1"/>
    <property type="molecule type" value="Genomic_DNA"/>
</dbReference>
<dbReference type="EMBL" id="BX284602">
    <property type="protein sequence ID" value="CTQ86488.1"/>
    <property type="molecule type" value="Genomic_DNA"/>
</dbReference>
<dbReference type="RefSeq" id="NP_001022180.2">
    <property type="nucleotide sequence ID" value="NM_001027009.2"/>
</dbReference>
<dbReference type="RefSeq" id="NP_001022181.2">
    <molecule id="H2L056-2"/>
    <property type="nucleotide sequence ID" value="NM_001027010.6"/>
</dbReference>
<dbReference type="RefSeq" id="NP_001300547.1">
    <molecule id="H2L056-3"/>
    <property type="nucleotide sequence ID" value="NM_001313618.3"/>
</dbReference>
<dbReference type="RefSeq" id="NP_001300548.1">
    <molecule id="H2L056-4"/>
    <property type="nucleotide sequence ID" value="NM_001313619.3"/>
</dbReference>
<dbReference type="RefSeq" id="NP_001300549.1">
    <molecule id="H2L056-5"/>
    <property type="nucleotide sequence ID" value="NM_001313620.3"/>
</dbReference>
<dbReference type="RefSeq" id="NP_001370738.1">
    <molecule id="H2L056-1"/>
    <property type="nucleotide sequence ID" value="NM_001383772.2"/>
</dbReference>
<dbReference type="SMR" id="H2L056"/>
<dbReference type="FunCoup" id="H2L056">
    <property type="interactions" value="2996"/>
</dbReference>
<dbReference type="STRING" id="6239.F48A11.5a.1"/>
<dbReference type="PaxDb" id="6239-F48A11.5a"/>
<dbReference type="PeptideAtlas" id="H2L056"/>
<dbReference type="EnsemblMetazoa" id="F48A11.5a.1">
    <molecule id="H2L056-1"/>
    <property type="protein sequence ID" value="F48A11.5a.1"/>
    <property type="gene ID" value="WBGene00018586"/>
</dbReference>
<dbReference type="EnsemblMetazoa" id="F48A11.5b.1">
    <molecule id="H2L056-2"/>
    <property type="protein sequence ID" value="F48A11.5b.1"/>
    <property type="gene ID" value="WBGene00018586"/>
</dbReference>
<dbReference type="EnsemblMetazoa" id="F48A11.5c.1">
    <molecule id="H2L056-3"/>
    <property type="protein sequence ID" value="F48A11.5c.1"/>
    <property type="gene ID" value="WBGene00018586"/>
</dbReference>
<dbReference type="EnsemblMetazoa" id="F48A11.5d.1">
    <molecule id="H2L056-4"/>
    <property type="protein sequence ID" value="F48A11.5d.1"/>
    <property type="gene ID" value="WBGene00018586"/>
</dbReference>
<dbReference type="EnsemblMetazoa" id="F48A11.5e.1">
    <molecule id="H2L056-5"/>
    <property type="protein sequence ID" value="F48A11.5e.1"/>
    <property type="gene ID" value="WBGene00018586"/>
</dbReference>
<dbReference type="GeneID" id="173407"/>
<dbReference type="KEGG" id="cel:CELE_F48A11.5"/>
<dbReference type="UCSC" id="F48A11.5b">
    <property type="organism name" value="c. elegans"/>
</dbReference>
<dbReference type="AGR" id="WB:WBGene00018586"/>
<dbReference type="CTD" id="173407"/>
<dbReference type="WormBase" id="F48A11.5a">
    <molecule id="H2L056-1"/>
    <property type="protein sequence ID" value="CE46198"/>
    <property type="gene ID" value="WBGene00018586"/>
    <property type="gene designation" value="ubxn-3"/>
</dbReference>
<dbReference type="WormBase" id="F48A11.5b">
    <molecule id="H2L056-2"/>
    <property type="protein sequence ID" value="CE46277"/>
    <property type="gene ID" value="WBGene00018586"/>
    <property type="gene designation" value="ubxn-3"/>
</dbReference>
<dbReference type="WormBase" id="F48A11.5c">
    <molecule id="H2L056-3"/>
    <property type="protein sequence ID" value="CE50808"/>
    <property type="gene ID" value="WBGene00018586"/>
    <property type="gene designation" value="ubxn-3"/>
</dbReference>
<dbReference type="WormBase" id="F48A11.5d">
    <molecule id="H2L056-4"/>
    <property type="protein sequence ID" value="CE50868"/>
    <property type="gene ID" value="WBGene00018586"/>
    <property type="gene designation" value="ubxn-3"/>
</dbReference>
<dbReference type="WormBase" id="F48A11.5e">
    <molecule id="H2L056-5"/>
    <property type="protein sequence ID" value="CE50740"/>
    <property type="gene ID" value="WBGene00018586"/>
    <property type="gene designation" value="ubxn-3"/>
</dbReference>
<dbReference type="eggNOG" id="KOG1363">
    <property type="taxonomic scope" value="Eukaryota"/>
</dbReference>
<dbReference type="GeneTree" id="ENSGT00940000154831"/>
<dbReference type="HOGENOM" id="CLU_034590_0_0_1"/>
<dbReference type="InParanoid" id="H2L056"/>
<dbReference type="OMA" id="THRIWTS"/>
<dbReference type="OrthoDB" id="1920064at2759"/>
<dbReference type="PhylomeDB" id="H2L056"/>
<dbReference type="PRO" id="PR:H2L056"/>
<dbReference type="Proteomes" id="UP000001940">
    <property type="component" value="Chromosome II"/>
</dbReference>
<dbReference type="Bgee" id="WBGene00018586">
    <property type="expression patterns" value="Expressed in adult organism and 3 other cell types or tissues"/>
</dbReference>
<dbReference type="GO" id="GO:0000785">
    <property type="term" value="C:chromatin"/>
    <property type="evidence" value="ECO:0000314"/>
    <property type="project" value="UniProtKB"/>
</dbReference>
<dbReference type="GO" id="GO:0005737">
    <property type="term" value="C:cytoplasm"/>
    <property type="evidence" value="ECO:0000314"/>
    <property type="project" value="UniProtKB"/>
</dbReference>
<dbReference type="GO" id="GO:0005783">
    <property type="term" value="C:endoplasmic reticulum"/>
    <property type="evidence" value="ECO:0000318"/>
    <property type="project" value="GO_Central"/>
</dbReference>
<dbReference type="GO" id="GO:0005634">
    <property type="term" value="C:nucleus"/>
    <property type="evidence" value="ECO:0000314"/>
    <property type="project" value="UniProtKB"/>
</dbReference>
<dbReference type="GO" id="GO:0048471">
    <property type="term" value="C:perinuclear region of cytoplasm"/>
    <property type="evidence" value="ECO:0000314"/>
    <property type="project" value="WormBase"/>
</dbReference>
<dbReference type="GO" id="GO:0036435">
    <property type="term" value="F:K48-linked polyubiquitin modification-dependent protein binding"/>
    <property type="evidence" value="ECO:0000314"/>
    <property type="project" value="UniProtKB"/>
</dbReference>
<dbReference type="GO" id="GO:0044877">
    <property type="term" value="F:protein-containing complex binding"/>
    <property type="evidence" value="ECO:0000314"/>
    <property type="project" value="UniProtKB"/>
</dbReference>
<dbReference type="GO" id="GO:0043130">
    <property type="term" value="F:ubiquitin binding"/>
    <property type="evidence" value="ECO:0000318"/>
    <property type="project" value="GO_Central"/>
</dbReference>
<dbReference type="GO" id="GO:0030154">
    <property type="term" value="P:cell differentiation"/>
    <property type="evidence" value="ECO:0007669"/>
    <property type="project" value="UniProtKB-KW"/>
</dbReference>
<dbReference type="GO" id="GO:0036503">
    <property type="term" value="P:ERAD pathway"/>
    <property type="evidence" value="ECO:0000318"/>
    <property type="project" value="GO_Central"/>
</dbReference>
<dbReference type="GO" id="GO:0042006">
    <property type="term" value="P:masculinization of hermaphroditic germ-line"/>
    <property type="evidence" value="ECO:0000316"/>
    <property type="project" value="UniProtKB"/>
</dbReference>
<dbReference type="GO" id="GO:0045977">
    <property type="term" value="P:positive regulation of mitotic cell cycle, embryonic"/>
    <property type="evidence" value="ECO:0000316"/>
    <property type="project" value="UniProtKB"/>
</dbReference>
<dbReference type="GO" id="GO:0045732">
    <property type="term" value="P:positive regulation of protein catabolic process"/>
    <property type="evidence" value="ECO:0000316"/>
    <property type="project" value="UniProtKB"/>
</dbReference>
<dbReference type="GO" id="GO:1905634">
    <property type="term" value="P:regulation of protein localization to chromatin"/>
    <property type="evidence" value="ECO:0000316"/>
    <property type="project" value="UniProtKB"/>
</dbReference>
<dbReference type="GO" id="GO:0007283">
    <property type="term" value="P:spermatogenesis"/>
    <property type="evidence" value="ECO:0000316"/>
    <property type="project" value="UniProtKB"/>
</dbReference>
<dbReference type="CDD" id="cd01771">
    <property type="entry name" value="UBX_UBXN3A"/>
    <property type="match status" value="1"/>
</dbReference>
<dbReference type="Gene3D" id="1.10.8.10">
    <property type="entry name" value="DNA helicase RuvA subunit, C-terminal domain"/>
    <property type="match status" value="1"/>
</dbReference>
<dbReference type="Gene3D" id="3.40.30.10">
    <property type="entry name" value="Glutaredoxin"/>
    <property type="match status" value="1"/>
</dbReference>
<dbReference type="Gene3D" id="3.10.20.90">
    <property type="entry name" value="Phosphatidylinositol 3-kinase Catalytic Subunit, Chain A, domain 1"/>
    <property type="match status" value="1"/>
</dbReference>
<dbReference type="InterPro" id="IPR033043">
    <property type="entry name" value="FAF1-like_UBX"/>
</dbReference>
<dbReference type="InterPro" id="IPR049483">
    <property type="entry name" value="FAF1_2-like_UAS"/>
</dbReference>
<dbReference type="InterPro" id="IPR006577">
    <property type="entry name" value="UAS"/>
</dbReference>
<dbReference type="InterPro" id="IPR029071">
    <property type="entry name" value="Ubiquitin-like_domsf"/>
</dbReference>
<dbReference type="InterPro" id="IPR001012">
    <property type="entry name" value="UBX_dom"/>
</dbReference>
<dbReference type="InterPro" id="IPR050730">
    <property type="entry name" value="UBX_domain-protein"/>
</dbReference>
<dbReference type="PANTHER" id="PTHR23322">
    <property type="entry name" value="FAS-ASSOCIATED PROTEIN"/>
    <property type="match status" value="1"/>
</dbReference>
<dbReference type="PANTHER" id="PTHR23322:SF97">
    <property type="entry name" value="UBX DOMAIN-CONTAINING PROTEIN 3"/>
    <property type="match status" value="1"/>
</dbReference>
<dbReference type="Pfam" id="PF21021">
    <property type="entry name" value="FAF1"/>
    <property type="match status" value="1"/>
</dbReference>
<dbReference type="Pfam" id="PF14555">
    <property type="entry name" value="UBA_4"/>
    <property type="match status" value="1"/>
</dbReference>
<dbReference type="Pfam" id="PF00789">
    <property type="entry name" value="UBX"/>
    <property type="match status" value="1"/>
</dbReference>
<dbReference type="SMART" id="SM00594">
    <property type="entry name" value="UAS"/>
    <property type="match status" value="1"/>
</dbReference>
<dbReference type="SUPFAM" id="SSF54236">
    <property type="entry name" value="Ubiquitin-like"/>
    <property type="match status" value="1"/>
</dbReference>
<dbReference type="PROSITE" id="PS50033">
    <property type="entry name" value="UBX"/>
    <property type="match status" value="1"/>
</dbReference>
<name>UBXN3_CAEEL</name>
<evidence type="ECO:0000255" key="1"/>
<evidence type="ECO:0000255" key="2">
    <source>
        <dbReference type="PROSITE-ProRule" id="PRU00215"/>
    </source>
</evidence>
<evidence type="ECO:0000256" key="3">
    <source>
        <dbReference type="SAM" id="MobiDB-lite"/>
    </source>
</evidence>
<evidence type="ECO:0000269" key="4">
    <source>
    </source>
</evidence>
<evidence type="ECO:0000269" key="5">
    <source>
    </source>
</evidence>
<evidence type="ECO:0000269" key="6">
    <source>
    </source>
</evidence>
<evidence type="ECO:0000269" key="7">
    <source>
    </source>
</evidence>
<evidence type="ECO:0000305" key="8"/>
<evidence type="ECO:0000312" key="9">
    <source>
        <dbReference type="Proteomes" id="UP000001940"/>
    </source>
</evidence>
<evidence type="ECO:0000312" key="10">
    <source>
        <dbReference type="WormBase" id="F48A11.5a"/>
    </source>
</evidence>
<evidence type="ECO:0000312" key="11">
    <source>
        <dbReference type="WormBase" id="F48A11.5b"/>
    </source>
</evidence>
<evidence type="ECO:0000312" key="12">
    <source>
        <dbReference type="WormBase" id="F48A11.5c"/>
    </source>
</evidence>
<evidence type="ECO:0000312" key="13">
    <source>
        <dbReference type="WormBase" id="F48A11.5d"/>
    </source>
</evidence>
<evidence type="ECO:0000312" key="14">
    <source>
        <dbReference type="WormBase" id="F48A11.5e"/>
    </source>
</evidence>
<feature type="chain" id="PRO_0000444375" description="UBX domain-containing protein 3">
    <location>
        <begin position="1"/>
        <end position="613"/>
    </location>
</feature>
<feature type="domain" description="UBX" evidence="2">
    <location>
        <begin position="531"/>
        <end position="610"/>
    </location>
</feature>
<feature type="region of interest" description="Disordered" evidence="3">
    <location>
        <begin position="67"/>
        <end position="223"/>
    </location>
</feature>
<feature type="region of interest" description="Disordered" evidence="3">
    <location>
        <begin position="453"/>
        <end position="472"/>
    </location>
</feature>
<feature type="coiled-coil region" evidence="1">
    <location>
        <begin position="452"/>
        <end position="517"/>
    </location>
</feature>
<feature type="short sequence motif" description="Interaction with cdc-48" evidence="6">
    <location>
        <begin position="582"/>
        <end position="584"/>
    </location>
</feature>
<feature type="compositionally biased region" description="Low complexity" evidence="3">
    <location>
        <begin position="68"/>
        <end position="82"/>
    </location>
</feature>
<feature type="compositionally biased region" description="Basic residues" evidence="3">
    <location>
        <begin position="137"/>
        <end position="149"/>
    </location>
</feature>
<feature type="compositionally biased region" description="Low complexity" evidence="3">
    <location>
        <begin position="158"/>
        <end position="169"/>
    </location>
</feature>
<feature type="splice variant" id="VSP_059592" description="In isoform d." evidence="8">
    <location>
        <begin position="1"/>
        <end position="379"/>
    </location>
</feature>
<feature type="splice variant" id="VSP_059593" description="In isoform c and isoform e." evidence="8">
    <location>
        <begin position="1"/>
        <end position="94"/>
    </location>
</feature>
<feature type="splice variant" id="VSP_059594" description="In isoform b and isoform c." evidence="8">
    <location>
        <begin position="119"/>
        <end position="123"/>
    </location>
</feature>
<feature type="mutagenesis site" description="Prevents interaction with cdc-48 without affecting the interaction with cdt-1 and ubiquitinated protein substrates." evidence="6">
    <original>FPK</original>
    <variation>NAA</variation>
    <variation>SGG</variation>
    <location>
        <begin position="582"/>
        <end position="584"/>
    </location>
</feature>
<proteinExistence type="evidence at protein level"/>
<reference evidence="9" key="1">
    <citation type="journal article" date="1998" name="Science">
        <title>Genome sequence of the nematode C. elegans: a platform for investigating biology.</title>
        <authorList>
            <consortium name="The C. elegans sequencing consortium"/>
        </authorList>
    </citation>
    <scope>NUCLEOTIDE SEQUENCE [LARGE SCALE GENOMIC DNA]</scope>
    <source>
        <strain evidence="9">Bristol N2</strain>
    </source>
</reference>
<reference evidence="8" key="2">
    <citation type="journal article" date="2007" name="Biochem. Biophys. Res. Commun.">
        <title>Differential expression pattern of UBX family genes in Caenorhabditis elegans.</title>
        <authorList>
            <person name="Yamauchi S."/>
            <person name="Sasagawa Y."/>
            <person name="Ogura T."/>
            <person name="Yamanaka K."/>
        </authorList>
    </citation>
    <scope>TISSUE SPECIFICITY</scope>
    <scope>DEVELOPMENTAL STAGE</scope>
</reference>
<reference evidence="8" key="3">
    <citation type="journal article" date="2010" name="Genes Cells">
        <title>Caenorhabditis elegans UBX cofactors for CDC-48/p97 control spermatogenesis.</title>
        <authorList>
            <person name="Sasagawa Y."/>
            <person name="Yamanaka K."/>
            <person name="Saito-Sasagawa Y."/>
            <person name="Ogura T."/>
        </authorList>
    </citation>
    <scope>FUNCTION</scope>
    <scope>IDENTIFICATION IN A COMPLEX WITH CDC-48.1; UFD-1 AND NPL-4.1</scope>
    <scope>INTERACTION WITH CDC-48.1 AND CDC-48.2</scope>
    <scope>SUBCELLULAR LOCATION</scope>
    <scope>TISSUE SPECIFICITY</scope>
    <scope>DISRUPTION PHENOTYPE</scope>
</reference>
<reference evidence="8" key="4">
    <citation type="journal article" date="2016" name="Nat. Commun.">
        <title>Chromatin-associated degradation is defined by UBXN-3/FAF1 to safeguard DNA replication fork progression.</title>
        <authorList>
            <person name="Franz A."/>
            <person name="Pirson P.A."/>
            <person name="Pilger D."/>
            <person name="Halder S."/>
            <person name="Achuthankutty D."/>
            <person name="Kashkar H."/>
            <person name="Ramadan K."/>
            <person name="Hoppe T."/>
        </authorList>
    </citation>
    <scope>FUNCTION</scope>
    <scope>IDENTIFICATION IN A COMPLEX WITH CDC-48 AND CDT-1</scope>
    <scope>INTERACTION WITH CDC-48 AND CDT-1</scope>
    <scope>SUBCELLULAR LOCATION</scope>
    <scope>DEVELOPMENTAL STAGE</scope>
    <scope>DISRUPTION PHENOTYPE</scope>
    <scope>MUTAGENESIS OF 582-PHE--LYS-584</scope>
</reference>
<reference evidence="8" key="5">
    <citation type="journal article" date="2017" name="Nat. Cell Biol.">
        <title>CUL-2LRR-1 and UBXN-3 drive replisome disassembly during DNA replication termination and mitosis.</title>
        <authorList>
            <person name="Sonneville R."/>
            <person name="Moreno S.P."/>
            <person name="Knebel A."/>
            <person name="Johnson C."/>
            <person name="Hastie C.J."/>
            <person name="Gartner A."/>
            <person name="Gambus A."/>
            <person name="Labib K."/>
        </authorList>
    </citation>
    <scope>FUNCTION</scope>
    <scope>DISRUPTION PHENOTYPE</scope>
</reference>
<comment type="function">
    <text evidence="5 6 7">Ubiquitin-binding protein which acts as an adapter for ATPase cdc-48.1 and/or cdc-48.2, conferring substrate specificity (PubMed:20977550, PubMed:26842564, PubMed:28368371). Together with ubxn-1 and ubxn-2, plays a role in hermaphrodite spermatogenesis probably by promoting the degradation of sex determination terminal factor tra-1 (PubMed:20977550). During mitosis, ensures the degradation of DNA licensing factor cdt-1 and the disassembly of the DNA replication CMG helicase complex by promoting the dissociation from chromatin of several of its components including cdc-45 and sld-5 (PubMed:26842564, PubMed:28368371).</text>
</comment>
<comment type="subunit">
    <text evidence="5 6">Forms a complex composed of ubxn-3, cdc-48.1, ufd-1 and npl-4.1 (PubMed:20977550). Forms a complex composed of ubxn-3, cdc-48.1 and/or cdc-48.2 and substrate cdt-1 (PubMed:26842564). Interacts (via FPK motif) with cdc-48.1 (via N-terminus) and cdc-48.2 (via N-terminus) (PubMed:20977550, PubMed:26842564). Interacts (via N-terminus) with cdt-1 and ubiquitinated protein substrates; the interaction is cdc-48-independent (PubMed:26842564). May interact with npl-4.1 (PubMed:20977550).</text>
</comment>
<comment type="subcellular location">
    <subcellularLocation>
        <location evidence="6">Nucleus</location>
    </subcellularLocation>
    <subcellularLocation>
        <location evidence="5">Cytoplasm</location>
        <location evidence="5">Perinuclear region</location>
    </subcellularLocation>
    <subcellularLocation>
        <location evidence="6">Chromosome</location>
    </subcellularLocation>
    <subcellularLocation>
        <location evidence="6">Cytoplasm</location>
    </subcellularLocation>
    <text evidence="5 6">Colocalizes with cdc-48.1 to the perinuclear region in spermatocytes (PubMed:20977550). Localizes to the nucleus during S phase in a cdc-48 and npl-4-dependent manner (PubMed:26842564).</text>
</comment>
<comment type="alternative products">
    <event type="alternative splicing"/>
    <isoform>
        <id>H2L056-1</id>
        <name evidence="10">a</name>
        <sequence type="displayed"/>
    </isoform>
    <isoform>
        <id>H2L056-2</id>
        <name evidence="11">b</name>
        <sequence type="described" ref="VSP_059594"/>
    </isoform>
    <isoform>
        <id>H2L056-3</id>
        <name evidence="12">c</name>
        <sequence type="described" ref="VSP_059593 VSP_059594"/>
    </isoform>
    <isoform>
        <id>H2L056-4</id>
        <name evidence="13">d</name>
        <sequence type="described" ref="VSP_059592"/>
    </isoform>
    <isoform>
        <id>H2L056-5</id>
        <name evidence="14">e</name>
        <sequence type="described" ref="VSP_059593"/>
    </isoform>
</comment>
<comment type="tissue specificity">
    <text evidence="4 5">Expressed in the germline (at protein level) (PubMed:17498661, PubMed:20977550). Expressed in spermatocytes but not in mature sperm (at protein level) (PubMed:20977550). Expressed in the spermatheca and nerve cells (PubMed:17498661).</text>
</comment>
<comment type="developmental stage">
    <text evidence="4 6">Expressed in embryos (at protein level) (PubMed:17498661, PubMed:26842564). Also expressed in L4 larvae and adults (PubMed:17498661). Expressed to a lesser extent between L1 and L3 larval stages (PubMed:17498661).</text>
</comment>
<comment type="disruption phenotype">
    <text evidence="5 6 7">Causes approximately 30 percent embryonic lethality (PubMed:26842564). RNAi-mediated knockdown does not cause any visible phenotype (PubMed:20977550). Cell division at the 3-cell stage is delayed. In a cdc-48.1 (tm544) mutant background, the delay in cell cycle progression is further enhanced and DNA replication is impaired resulting in the formation of DNA repair rad-51 foci (PubMed:26842564). In addition, cdt-1 degradation and disassembly of cdc-45 and sld-5 from the chromatin during mitosis is impaired (PubMed:26842564). Simultaneous RNAi-mediated knockdown of lrr-1, causes a failure to disassemble components of the CGM helicase complex psf-1, cdc-45 and spd-5 from the chromatin resulting in their abnormal association with chromatin during mitosis (PubMed:28368371). Simultaneous RNAi-mediated knockdown of ubxn-1 and ubxn-2, causes 50 percent embryonic lethality (PubMed:20977550). The surviving hermaphrodite progeny are sterile due to a lack of sperm (PubMed:20977550). Abnormal accumulation of sex determination terminal factor tra-1 (PubMed:20977550). Germline development is normal (PubMed:20977550). In males, sperm production is normal (PubMed:20977550).</text>
</comment>
<gene>
    <name evidence="10" type="primary">ubxn-3</name>
    <name evidence="10" type="ORF">F48A11.5</name>
</gene>
<protein>
    <recommendedName>
        <fullName evidence="8">UBX domain-containing protein 3</fullName>
    </recommendedName>
</protein>